<sequence length="497" mass="51635">MSQPSARPSAVIVLAAGQGTRMKSTTPKIMHAIGGRSLVGHALAAAWSLAPEHLVAVVRHERARVAEHIETVAAQLGIDALAIADQDDVPGTGRAVELGLAALPADLEGTVVVTYGDVPLLTPETLARLVADHEADGNAVTVLTATLEDATGYGRIVRDAEGLVERIMEHKDALAHAESTGDDSFVAIREVNSGIYAFDAALLRRTLPAISTDNVQGEKYLTDVLGMARDEGGRVASVGTQDVWEVEGANDRRQLSDLGRRLNERVLRHWMKEGVTVVDPSSTWVDVTVTLSSDVTLKPGTQLHGATSVATGAVVGPDSTLTDTQVGERAVVKRTDATEAVIGADASIGPFTYLRPGTVLGEEGRIGAFYETKKVTIGRGAKLSHLGYAGDAEIGEYTNIGCGNITANYDGVNKHRTVIGAHVRTGSNTVFTAPVTVGDGAYTGAGAVVREDVPAGALALNAVSQRTLEGWVPAKRPGTSSAEAARAAGAEGSGAQG</sequence>
<comment type="function">
    <text evidence="1">Catalyzes the last two sequential reactions in the de novo biosynthetic pathway for UDP-N-acetylglucosamine (UDP-GlcNAc). The C-terminal domain catalyzes the transfer of acetyl group from acetyl coenzyme A to glucosamine-1-phosphate (GlcN-1-P) to produce N-acetylglucosamine-1-phosphate (GlcNAc-1-P), which is converted into UDP-GlcNAc by the transfer of uridine 5-monophosphate (from uridine 5-triphosphate), a reaction catalyzed by the N-terminal domain.</text>
</comment>
<comment type="catalytic activity">
    <reaction evidence="1">
        <text>alpha-D-glucosamine 1-phosphate + acetyl-CoA = N-acetyl-alpha-D-glucosamine 1-phosphate + CoA + H(+)</text>
        <dbReference type="Rhea" id="RHEA:13725"/>
        <dbReference type="ChEBI" id="CHEBI:15378"/>
        <dbReference type="ChEBI" id="CHEBI:57287"/>
        <dbReference type="ChEBI" id="CHEBI:57288"/>
        <dbReference type="ChEBI" id="CHEBI:57776"/>
        <dbReference type="ChEBI" id="CHEBI:58516"/>
        <dbReference type="EC" id="2.3.1.157"/>
    </reaction>
</comment>
<comment type="catalytic activity">
    <reaction evidence="1">
        <text>N-acetyl-alpha-D-glucosamine 1-phosphate + UTP + H(+) = UDP-N-acetyl-alpha-D-glucosamine + diphosphate</text>
        <dbReference type="Rhea" id="RHEA:13509"/>
        <dbReference type="ChEBI" id="CHEBI:15378"/>
        <dbReference type="ChEBI" id="CHEBI:33019"/>
        <dbReference type="ChEBI" id="CHEBI:46398"/>
        <dbReference type="ChEBI" id="CHEBI:57705"/>
        <dbReference type="ChEBI" id="CHEBI:57776"/>
        <dbReference type="EC" id="2.7.7.23"/>
    </reaction>
</comment>
<comment type="cofactor">
    <cofactor evidence="1">
        <name>Mg(2+)</name>
        <dbReference type="ChEBI" id="CHEBI:18420"/>
    </cofactor>
    <text evidence="1">Binds 1 Mg(2+) ion per subunit.</text>
</comment>
<comment type="pathway">
    <text evidence="1">Nucleotide-sugar biosynthesis; UDP-N-acetyl-alpha-D-glucosamine biosynthesis; N-acetyl-alpha-D-glucosamine 1-phosphate from alpha-D-glucosamine 6-phosphate (route II): step 2/2.</text>
</comment>
<comment type="pathway">
    <text evidence="1">Nucleotide-sugar biosynthesis; UDP-N-acetyl-alpha-D-glucosamine biosynthesis; UDP-N-acetyl-alpha-D-glucosamine from N-acetyl-alpha-D-glucosamine 1-phosphate: step 1/1.</text>
</comment>
<comment type="pathway">
    <text evidence="1">Bacterial outer membrane biogenesis; LPS lipid A biosynthesis.</text>
</comment>
<comment type="subunit">
    <text evidence="1">Homotrimer.</text>
</comment>
<comment type="subcellular location">
    <subcellularLocation>
        <location evidence="1">Cytoplasm</location>
    </subcellularLocation>
</comment>
<comment type="similarity">
    <text evidence="1">In the N-terminal section; belongs to the N-acetylglucosamine-1-phosphate uridyltransferase family.</text>
</comment>
<comment type="similarity">
    <text evidence="1">In the C-terminal section; belongs to the transferase hexapeptide repeat family.</text>
</comment>
<keyword id="KW-0012">Acyltransferase</keyword>
<keyword id="KW-0133">Cell shape</keyword>
<keyword id="KW-0961">Cell wall biogenesis/degradation</keyword>
<keyword id="KW-0963">Cytoplasm</keyword>
<keyword id="KW-0460">Magnesium</keyword>
<keyword id="KW-0479">Metal-binding</keyword>
<keyword id="KW-0511">Multifunctional enzyme</keyword>
<keyword id="KW-0548">Nucleotidyltransferase</keyword>
<keyword id="KW-0573">Peptidoglycan synthesis</keyword>
<keyword id="KW-1185">Reference proteome</keyword>
<keyword id="KW-0677">Repeat</keyword>
<keyword id="KW-0808">Transferase</keyword>
<evidence type="ECO:0000255" key="1">
    <source>
        <dbReference type="HAMAP-Rule" id="MF_01631"/>
    </source>
</evidence>
<evidence type="ECO:0000256" key="2">
    <source>
        <dbReference type="SAM" id="MobiDB-lite"/>
    </source>
</evidence>
<accession>C5C9D1</accession>
<protein>
    <recommendedName>
        <fullName evidence="1">Bifunctional protein GlmU</fullName>
    </recommendedName>
    <domain>
        <recommendedName>
            <fullName evidence="1">UDP-N-acetylglucosamine pyrophosphorylase</fullName>
            <ecNumber evidence="1">2.7.7.23</ecNumber>
        </recommendedName>
        <alternativeName>
            <fullName evidence="1">N-acetylglucosamine-1-phosphate uridyltransferase</fullName>
        </alternativeName>
    </domain>
    <domain>
        <recommendedName>
            <fullName evidence="1">Glucosamine-1-phosphate N-acetyltransferase</fullName>
            <ecNumber evidence="1">2.3.1.157</ecNumber>
        </recommendedName>
    </domain>
</protein>
<organism>
    <name type="scientific">Micrococcus luteus (strain ATCC 4698 / DSM 20030 / JCM 1464 / CCM 169 / CCUG 5858 / IAM 1056 / NBRC 3333 / NCIMB 9278 / NCTC 2665 / VKM Ac-2230)</name>
    <name type="common">Micrococcus lysodeikticus</name>
    <dbReference type="NCBI Taxonomy" id="465515"/>
    <lineage>
        <taxon>Bacteria</taxon>
        <taxon>Bacillati</taxon>
        <taxon>Actinomycetota</taxon>
        <taxon>Actinomycetes</taxon>
        <taxon>Micrococcales</taxon>
        <taxon>Micrococcaceae</taxon>
        <taxon>Micrococcus</taxon>
    </lineage>
</organism>
<gene>
    <name evidence="1" type="primary">glmU</name>
    <name type="ordered locus">Mlut_05450</name>
</gene>
<name>GLMU_MICLC</name>
<dbReference type="EC" id="2.7.7.23" evidence="1"/>
<dbReference type="EC" id="2.3.1.157" evidence="1"/>
<dbReference type="EMBL" id="CP001628">
    <property type="protein sequence ID" value="ACS30083.1"/>
    <property type="molecule type" value="Genomic_DNA"/>
</dbReference>
<dbReference type="RefSeq" id="WP_010079288.1">
    <property type="nucleotide sequence ID" value="NC_012803.1"/>
</dbReference>
<dbReference type="SMR" id="C5C9D1"/>
<dbReference type="STRING" id="465515.Mlut_05450"/>
<dbReference type="EnsemblBacteria" id="ACS30083">
    <property type="protein sequence ID" value="ACS30083"/>
    <property type="gene ID" value="Mlut_05450"/>
</dbReference>
<dbReference type="GeneID" id="93344720"/>
<dbReference type="KEGG" id="mlu:Mlut_05450"/>
<dbReference type="PATRIC" id="fig|465515.4.peg.513"/>
<dbReference type="eggNOG" id="COG1207">
    <property type="taxonomic scope" value="Bacteria"/>
</dbReference>
<dbReference type="HOGENOM" id="CLU_029499_15_2_11"/>
<dbReference type="UniPathway" id="UPA00113">
    <property type="reaction ID" value="UER00532"/>
</dbReference>
<dbReference type="UniPathway" id="UPA00113">
    <property type="reaction ID" value="UER00533"/>
</dbReference>
<dbReference type="UniPathway" id="UPA00973"/>
<dbReference type="Proteomes" id="UP000000738">
    <property type="component" value="Chromosome"/>
</dbReference>
<dbReference type="GO" id="GO:0005737">
    <property type="term" value="C:cytoplasm"/>
    <property type="evidence" value="ECO:0007669"/>
    <property type="project" value="UniProtKB-SubCell"/>
</dbReference>
<dbReference type="GO" id="GO:0016020">
    <property type="term" value="C:membrane"/>
    <property type="evidence" value="ECO:0007669"/>
    <property type="project" value="GOC"/>
</dbReference>
<dbReference type="GO" id="GO:0019134">
    <property type="term" value="F:glucosamine-1-phosphate N-acetyltransferase activity"/>
    <property type="evidence" value="ECO:0007669"/>
    <property type="project" value="UniProtKB-UniRule"/>
</dbReference>
<dbReference type="GO" id="GO:0000287">
    <property type="term" value="F:magnesium ion binding"/>
    <property type="evidence" value="ECO:0007669"/>
    <property type="project" value="UniProtKB-UniRule"/>
</dbReference>
<dbReference type="GO" id="GO:0003977">
    <property type="term" value="F:UDP-N-acetylglucosamine diphosphorylase activity"/>
    <property type="evidence" value="ECO:0007669"/>
    <property type="project" value="UniProtKB-UniRule"/>
</dbReference>
<dbReference type="GO" id="GO:0000902">
    <property type="term" value="P:cell morphogenesis"/>
    <property type="evidence" value="ECO:0007669"/>
    <property type="project" value="UniProtKB-UniRule"/>
</dbReference>
<dbReference type="GO" id="GO:0071555">
    <property type="term" value="P:cell wall organization"/>
    <property type="evidence" value="ECO:0007669"/>
    <property type="project" value="UniProtKB-KW"/>
</dbReference>
<dbReference type="GO" id="GO:0009245">
    <property type="term" value="P:lipid A biosynthetic process"/>
    <property type="evidence" value="ECO:0007669"/>
    <property type="project" value="UniProtKB-UniRule"/>
</dbReference>
<dbReference type="GO" id="GO:0009252">
    <property type="term" value="P:peptidoglycan biosynthetic process"/>
    <property type="evidence" value="ECO:0007669"/>
    <property type="project" value="UniProtKB-UniRule"/>
</dbReference>
<dbReference type="GO" id="GO:0008360">
    <property type="term" value="P:regulation of cell shape"/>
    <property type="evidence" value="ECO:0007669"/>
    <property type="project" value="UniProtKB-KW"/>
</dbReference>
<dbReference type="GO" id="GO:0006048">
    <property type="term" value="P:UDP-N-acetylglucosamine biosynthetic process"/>
    <property type="evidence" value="ECO:0007669"/>
    <property type="project" value="UniProtKB-UniPathway"/>
</dbReference>
<dbReference type="CDD" id="cd02540">
    <property type="entry name" value="GT2_GlmU_N_bac"/>
    <property type="match status" value="1"/>
</dbReference>
<dbReference type="CDD" id="cd03353">
    <property type="entry name" value="LbH_GlmU_C"/>
    <property type="match status" value="1"/>
</dbReference>
<dbReference type="Gene3D" id="2.160.10.10">
    <property type="entry name" value="Hexapeptide repeat proteins"/>
    <property type="match status" value="1"/>
</dbReference>
<dbReference type="Gene3D" id="3.90.550.10">
    <property type="entry name" value="Spore Coat Polysaccharide Biosynthesis Protein SpsA, Chain A"/>
    <property type="match status" value="1"/>
</dbReference>
<dbReference type="HAMAP" id="MF_01631">
    <property type="entry name" value="GlmU"/>
    <property type="match status" value="1"/>
</dbReference>
<dbReference type="InterPro" id="IPR005882">
    <property type="entry name" value="Bifunctional_GlmU"/>
</dbReference>
<dbReference type="InterPro" id="IPR050065">
    <property type="entry name" value="GlmU-like"/>
</dbReference>
<dbReference type="InterPro" id="IPR038009">
    <property type="entry name" value="GlmU_C_LbH"/>
</dbReference>
<dbReference type="InterPro" id="IPR001451">
    <property type="entry name" value="Hexapep"/>
</dbReference>
<dbReference type="InterPro" id="IPR025877">
    <property type="entry name" value="MobA-like_NTP_Trfase"/>
</dbReference>
<dbReference type="InterPro" id="IPR029044">
    <property type="entry name" value="Nucleotide-diphossugar_trans"/>
</dbReference>
<dbReference type="InterPro" id="IPR011004">
    <property type="entry name" value="Trimer_LpxA-like_sf"/>
</dbReference>
<dbReference type="NCBIfam" id="TIGR01173">
    <property type="entry name" value="glmU"/>
    <property type="match status" value="1"/>
</dbReference>
<dbReference type="NCBIfam" id="NF010932">
    <property type="entry name" value="PRK14352.1"/>
    <property type="match status" value="1"/>
</dbReference>
<dbReference type="PANTHER" id="PTHR43584:SF3">
    <property type="entry name" value="BIFUNCTIONAL PROTEIN GLMU"/>
    <property type="match status" value="1"/>
</dbReference>
<dbReference type="PANTHER" id="PTHR43584">
    <property type="entry name" value="NUCLEOTIDYL TRANSFERASE"/>
    <property type="match status" value="1"/>
</dbReference>
<dbReference type="Pfam" id="PF00132">
    <property type="entry name" value="Hexapep"/>
    <property type="match status" value="1"/>
</dbReference>
<dbReference type="Pfam" id="PF12804">
    <property type="entry name" value="NTP_transf_3"/>
    <property type="match status" value="1"/>
</dbReference>
<dbReference type="SUPFAM" id="SSF53448">
    <property type="entry name" value="Nucleotide-diphospho-sugar transferases"/>
    <property type="match status" value="1"/>
</dbReference>
<dbReference type="SUPFAM" id="SSF51161">
    <property type="entry name" value="Trimeric LpxA-like enzymes"/>
    <property type="match status" value="1"/>
</dbReference>
<feature type="chain" id="PRO_1000215778" description="Bifunctional protein GlmU">
    <location>
        <begin position="1"/>
        <end position="497"/>
    </location>
</feature>
<feature type="region of interest" description="Pyrophosphorylase" evidence="1">
    <location>
        <begin position="1"/>
        <end position="252"/>
    </location>
</feature>
<feature type="region of interest" description="Linker" evidence="1">
    <location>
        <begin position="253"/>
        <end position="273"/>
    </location>
</feature>
<feature type="region of interest" description="N-acetyltransferase" evidence="1">
    <location>
        <begin position="274"/>
        <end position="497"/>
    </location>
</feature>
<feature type="region of interest" description="Disordered" evidence="2">
    <location>
        <begin position="473"/>
        <end position="497"/>
    </location>
</feature>
<feature type="compositionally biased region" description="Low complexity" evidence="2">
    <location>
        <begin position="480"/>
        <end position="490"/>
    </location>
</feature>
<feature type="active site" description="Proton acceptor" evidence="1">
    <location>
        <position position="385"/>
    </location>
</feature>
<feature type="binding site" evidence="1">
    <location>
        <begin position="14"/>
        <end position="17"/>
    </location>
    <ligand>
        <name>UDP-N-acetyl-alpha-D-glucosamine</name>
        <dbReference type="ChEBI" id="CHEBI:57705"/>
    </ligand>
</feature>
<feature type="binding site" evidence="1">
    <location>
        <position position="28"/>
    </location>
    <ligand>
        <name>UDP-N-acetyl-alpha-D-glucosamine</name>
        <dbReference type="ChEBI" id="CHEBI:57705"/>
    </ligand>
</feature>
<feature type="binding site" evidence="1">
    <location>
        <position position="86"/>
    </location>
    <ligand>
        <name>UDP-N-acetyl-alpha-D-glucosamine</name>
        <dbReference type="ChEBI" id="CHEBI:57705"/>
    </ligand>
</feature>
<feature type="binding site" evidence="1">
    <location>
        <begin position="91"/>
        <end position="92"/>
    </location>
    <ligand>
        <name>UDP-N-acetyl-alpha-D-glucosamine</name>
        <dbReference type="ChEBI" id="CHEBI:57705"/>
    </ligand>
</feature>
<feature type="binding site" evidence="1">
    <location>
        <begin position="115"/>
        <end position="117"/>
    </location>
    <ligand>
        <name>UDP-N-acetyl-alpha-D-glucosamine</name>
        <dbReference type="ChEBI" id="CHEBI:57705"/>
    </ligand>
</feature>
<feature type="binding site" evidence="1">
    <location>
        <position position="117"/>
    </location>
    <ligand>
        <name>Mg(2+)</name>
        <dbReference type="ChEBI" id="CHEBI:18420"/>
    </ligand>
</feature>
<feature type="binding site" evidence="1">
    <location>
        <position position="154"/>
    </location>
    <ligand>
        <name>UDP-N-acetyl-alpha-D-glucosamine</name>
        <dbReference type="ChEBI" id="CHEBI:57705"/>
    </ligand>
</feature>
<feature type="binding site" evidence="1">
    <location>
        <position position="169"/>
    </location>
    <ligand>
        <name>UDP-N-acetyl-alpha-D-glucosamine</name>
        <dbReference type="ChEBI" id="CHEBI:57705"/>
    </ligand>
</feature>
<feature type="binding site" evidence="1">
    <location>
        <position position="192"/>
    </location>
    <ligand>
        <name>UDP-N-acetyl-alpha-D-glucosamine</name>
        <dbReference type="ChEBI" id="CHEBI:57705"/>
    </ligand>
</feature>
<feature type="binding site" evidence="1">
    <location>
        <position position="250"/>
    </location>
    <ligand>
        <name>Mg(2+)</name>
        <dbReference type="ChEBI" id="CHEBI:18420"/>
    </ligand>
</feature>
<feature type="binding site" evidence="1">
    <location>
        <position position="250"/>
    </location>
    <ligand>
        <name>UDP-N-acetyl-alpha-D-glucosamine</name>
        <dbReference type="ChEBI" id="CHEBI:57705"/>
    </ligand>
</feature>
<feature type="binding site" evidence="1">
    <location>
        <position position="355"/>
    </location>
    <ligand>
        <name>UDP-N-acetyl-alpha-D-glucosamine</name>
        <dbReference type="ChEBI" id="CHEBI:57705"/>
    </ligand>
</feature>
<feature type="binding site" evidence="1">
    <location>
        <position position="373"/>
    </location>
    <ligand>
        <name>UDP-N-acetyl-alpha-D-glucosamine</name>
        <dbReference type="ChEBI" id="CHEBI:57705"/>
    </ligand>
</feature>
<feature type="binding site" evidence="1">
    <location>
        <position position="388"/>
    </location>
    <ligand>
        <name>UDP-N-acetyl-alpha-D-glucosamine</name>
        <dbReference type="ChEBI" id="CHEBI:57705"/>
    </ligand>
</feature>
<feature type="binding site" evidence="1">
    <location>
        <position position="399"/>
    </location>
    <ligand>
        <name>UDP-N-acetyl-alpha-D-glucosamine</name>
        <dbReference type="ChEBI" id="CHEBI:57705"/>
    </ligand>
</feature>
<feature type="binding site" evidence="1">
    <location>
        <begin position="408"/>
        <end position="409"/>
    </location>
    <ligand>
        <name>acetyl-CoA</name>
        <dbReference type="ChEBI" id="CHEBI:57288"/>
    </ligand>
</feature>
<feature type="binding site" evidence="1">
    <location>
        <position position="427"/>
    </location>
    <ligand>
        <name>acetyl-CoA</name>
        <dbReference type="ChEBI" id="CHEBI:57288"/>
    </ligand>
</feature>
<feature type="binding site" evidence="1">
    <location>
        <position position="445"/>
    </location>
    <ligand>
        <name>acetyl-CoA</name>
        <dbReference type="ChEBI" id="CHEBI:57288"/>
    </ligand>
</feature>
<reference key="1">
    <citation type="journal article" date="2010" name="J. Bacteriol.">
        <title>Genome sequence of the Fleming strain of Micrococcus luteus, a simple free-living actinobacterium.</title>
        <authorList>
            <person name="Young M."/>
            <person name="Artsatbanov V."/>
            <person name="Beller H.R."/>
            <person name="Chandra G."/>
            <person name="Chater K.F."/>
            <person name="Dover L.G."/>
            <person name="Goh E.B."/>
            <person name="Kahan T."/>
            <person name="Kaprelyants A.S."/>
            <person name="Kyrpides N."/>
            <person name="Lapidus A."/>
            <person name="Lowry S.R."/>
            <person name="Lykidis A."/>
            <person name="Mahillon J."/>
            <person name="Markowitz V."/>
            <person name="Mavromatis K."/>
            <person name="Mukamolova G.V."/>
            <person name="Oren A."/>
            <person name="Rokem J.S."/>
            <person name="Smith M.C."/>
            <person name="Young D.I."/>
            <person name="Greenblatt C.L."/>
        </authorList>
    </citation>
    <scope>NUCLEOTIDE SEQUENCE [LARGE SCALE GENOMIC DNA]</scope>
    <source>
        <strain>ATCC 4698 / DSM 20030 / JCM 1464 / CCM 169 / CCUG 5858 / IAM 1056 / NBRC 3333 / NCIMB 9278 / NCTC 2665 / VKM Ac-2230</strain>
    </source>
</reference>
<proteinExistence type="inferred from homology"/>